<organism>
    <name type="scientific">Arabidopsis thaliana</name>
    <name type="common">Mouse-ear cress</name>
    <dbReference type="NCBI Taxonomy" id="3702"/>
    <lineage>
        <taxon>Eukaryota</taxon>
        <taxon>Viridiplantae</taxon>
        <taxon>Streptophyta</taxon>
        <taxon>Embryophyta</taxon>
        <taxon>Tracheophyta</taxon>
        <taxon>Spermatophyta</taxon>
        <taxon>Magnoliopsida</taxon>
        <taxon>eudicotyledons</taxon>
        <taxon>Gunneridae</taxon>
        <taxon>Pentapetalae</taxon>
        <taxon>rosids</taxon>
        <taxon>malvids</taxon>
        <taxon>Brassicales</taxon>
        <taxon>Brassicaceae</taxon>
        <taxon>Camelineae</taxon>
        <taxon>Arabidopsis</taxon>
    </lineage>
</organism>
<reference key="1">
    <citation type="journal article" date="2000" name="Nature">
        <title>Sequence and analysis of chromosome 1 of the plant Arabidopsis thaliana.</title>
        <authorList>
            <person name="Theologis A."/>
            <person name="Ecker J.R."/>
            <person name="Palm C.J."/>
            <person name="Federspiel N.A."/>
            <person name="Kaul S."/>
            <person name="White O."/>
            <person name="Alonso J."/>
            <person name="Altafi H."/>
            <person name="Araujo R."/>
            <person name="Bowman C.L."/>
            <person name="Brooks S.Y."/>
            <person name="Buehler E."/>
            <person name="Chan A."/>
            <person name="Chao Q."/>
            <person name="Chen H."/>
            <person name="Cheuk R.F."/>
            <person name="Chin C.W."/>
            <person name="Chung M.K."/>
            <person name="Conn L."/>
            <person name="Conway A.B."/>
            <person name="Conway A.R."/>
            <person name="Creasy T.H."/>
            <person name="Dewar K."/>
            <person name="Dunn P."/>
            <person name="Etgu P."/>
            <person name="Feldblyum T.V."/>
            <person name="Feng J.-D."/>
            <person name="Fong B."/>
            <person name="Fujii C.Y."/>
            <person name="Gill J.E."/>
            <person name="Goldsmith A.D."/>
            <person name="Haas B."/>
            <person name="Hansen N.F."/>
            <person name="Hughes B."/>
            <person name="Huizar L."/>
            <person name="Hunter J.L."/>
            <person name="Jenkins J."/>
            <person name="Johnson-Hopson C."/>
            <person name="Khan S."/>
            <person name="Khaykin E."/>
            <person name="Kim C.J."/>
            <person name="Koo H.L."/>
            <person name="Kremenetskaia I."/>
            <person name="Kurtz D.B."/>
            <person name="Kwan A."/>
            <person name="Lam B."/>
            <person name="Langin-Hooper S."/>
            <person name="Lee A."/>
            <person name="Lee J.M."/>
            <person name="Lenz C.A."/>
            <person name="Li J.H."/>
            <person name="Li Y.-P."/>
            <person name="Lin X."/>
            <person name="Liu S.X."/>
            <person name="Liu Z.A."/>
            <person name="Luros J.S."/>
            <person name="Maiti R."/>
            <person name="Marziali A."/>
            <person name="Militscher J."/>
            <person name="Miranda M."/>
            <person name="Nguyen M."/>
            <person name="Nierman W.C."/>
            <person name="Osborne B.I."/>
            <person name="Pai G."/>
            <person name="Peterson J."/>
            <person name="Pham P.K."/>
            <person name="Rizzo M."/>
            <person name="Rooney T."/>
            <person name="Rowley D."/>
            <person name="Sakano H."/>
            <person name="Salzberg S.L."/>
            <person name="Schwartz J.R."/>
            <person name="Shinn P."/>
            <person name="Southwick A.M."/>
            <person name="Sun H."/>
            <person name="Tallon L.J."/>
            <person name="Tambunga G."/>
            <person name="Toriumi M.J."/>
            <person name="Town C.D."/>
            <person name="Utterback T."/>
            <person name="Van Aken S."/>
            <person name="Vaysberg M."/>
            <person name="Vysotskaia V.S."/>
            <person name="Walker M."/>
            <person name="Wu D."/>
            <person name="Yu G."/>
            <person name="Fraser C.M."/>
            <person name="Venter J.C."/>
            <person name="Davis R.W."/>
        </authorList>
    </citation>
    <scope>NUCLEOTIDE SEQUENCE [LARGE SCALE GENOMIC DNA]</scope>
    <source>
        <strain>cv. Columbia</strain>
    </source>
</reference>
<reference key="2">
    <citation type="journal article" date="2017" name="Plant J.">
        <title>Araport11: a complete reannotation of the Arabidopsis thaliana reference genome.</title>
        <authorList>
            <person name="Cheng C.Y."/>
            <person name="Krishnakumar V."/>
            <person name="Chan A.P."/>
            <person name="Thibaud-Nissen F."/>
            <person name="Schobel S."/>
            <person name="Town C.D."/>
        </authorList>
    </citation>
    <scope>GENOME REANNOTATION</scope>
    <source>
        <strain>cv. Columbia</strain>
    </source>
</reference>
<reference key="3">
    <citation type="submission" date="2004-04" db="EMBL/GenBank/DDBJ databases">
        <title>Arabidopsis ORF clones.</title>
        <authorList>
            <person name="Shinn P."/>
            <person name="Chen H."/>
            <person name="Cheuk R.F."/>
            <person name="Kim C.J."/>
            <person name="Ecker J.R."/>
        </authorList>
    </citation>
    <scope>NUCLEOTIDE SEQUENCE [LARGE SCALE MRNA]</scope>
    <source>
        <strain>cv. Columbia</strain>
    </source>
</reference>
<reference key="4">
    <citation type="journal article" date="2008" name="PLoS ONE">
        <title>Sorting signals, N-terminal modifications and abundance of the chloroplast proteome.</title>
        <authorList>
            <person name="Zybailov B."/>
            <person name="Rutschow H."/>
            <person name="Friso G."/>
            <person name="Rudella A."/>
            <person name="Emanuelsson O."/>
            <person name="Sun Q."/>
            <person name="van Wijk K.J."/>
        </authorList>
    </citation>
    <scope>PROTEIN SEQUENCE OF 45-57</scope>
    <scope>ACETYLATION AT SER-45</scope>
    <scope>IDENTIFICATION BY MASS SPECTROMETRY</scope>
    <scope>SUBCELLULAR LOCATION [LARGE SCALE ANALYSIS]</scope>
</reference>
<reference key="5">
    <citation type="journal article" date="2001" name="J. Biol. Chem.">
        <title>The Arabidopsis thaliana ABC protein superfamily, a complete inventory.</title>
        <authorList>
            <person name="Sanchez-Fernandez R."/>
            <person name="Davies T.G."/>
            <person name="Coleman J.O."/>
            <person name="Rea P.A."/>
        </authorList>
    </citation>
    <scope>GENE FAMILY</scope>
    <scope>NOMENCLATURE</scope>
</reference>
<reference key="6">
    <citation type="journal article" date="2002" name="Planta">
        <title>Multifunctionality of plant ABC transporters -- more than just detoxifiers.</title>
        <authorList>
            <person name="Martinoia E."/>
            <person name="Klein M."/>
            <person name="Geisler M."/>
            <person name="Bovet L."/>
            <person name="Forestier C."/>
            <person name="Kolukisaoglu H.U."/>
            <person name="Mueller-Roeber B."/>
            <person name="Schulz B."/>
        </authorList>
    </citation>
    <scope>GENE FAMILY</scope>
</reference>
<reference key="7">
    <citation type="journal article" date="2008" name="Trends Plant Sci.">
        <title>Plant ABC proteins - a unified nomenclature and updated inventory.</title>
        <authorList>
            <person name="Verrier P.J."/>
            <person name="Bird D."/>
            <person name="Burla B."/>
            <person name="Dassa E."/>
            <person name="Forestier C."/>
            <person name="Geisler M."/>
            <person name="Klein M."/>
            <person name="Kolukisaoglu H.U."/>
            <person name="Lee Y."/>
            <person name="Martinoia E."/>
            <person name="Murphy A."/>
            <person name="Rea P.A."/>
            <person name="Samuels L."/>
            <person name="Schulz B."/>
            <person name="Spalding E.J."/>
            <person name="Yazaki K."/>
            <person name="Theodoulou F.L."/>
        </authorList>
    </citation>
    <scope>GENE FAMILY</scope>
    <scope>NOMENCLATURE</scope>
</reference>
<sequence length="706" mass="80054">MILMITAPVCPPHLLLRHSSLLRHESSIGNFHRKKNPRFRTVSCSSLLPQPSVRPDKASELKTLWKKFYKVASPYWFSEDKDQARLRLAAVFALTLATTGISVGFNFLGRDFYNSLANKDQEQFTKQLFYYLCAFAGGIPFFVLRDYTKETLSLRWRSWMTKYYLQRYLKDQTFYKIQSQSIIDNPDQRLVDDLSSFTGTALSFSLTLVNATIDLISFSNILFTIYPPLFLVLLLYSFGGTAISVFLGKGLVNLNFLQEKKEADFRYSLVRVRENAESIAFYGGEQNEMQLLLQRFRSAFDNLTELLIASRNLEFFTDGYRYLIQILPVAVVAPMYFSGKIEFGVINQSVSAFNHILGDFSLVVYQFQAISSFSAVIDRLGEFDDLLDNNIFRDPSDTVDEIELTYQSEMNSSLLDTNGSIKSQPNQKRLEIEELTLQTPTNGTTLVHNLSADVYDKDHLLIMGPSGSGKTSLLRAMAGLWRSGKGKITFYLDPEVDFTQEKSDTQENSGKRGDVLFLPQRPYMVLGSLRQQLLYPTWSATVEETTPGGSNIDGSPPLLIREDGNEKPTTDDLMRTLEKVCLGHIADRFGGLDSIHEWSSVLSLGEQQRLAFARLLLSQPKLALLDESTSALDEANEAFLYQQIQSAGITYISIGHRRTLTKFHNKILQISTADPKSNERNWRIEDVDAQDSLYGRLNQKEVPSES</sequence>
<accession>Q6NLC1</accession>
<accession>Q9SLJ9</accession>
<dbReference type="EC" id="7.-.-.-"/>
<dbReference type="EMBL" id="AC005287">
    <property type="protein sequence ID" value="AAD25615.1"/>
    <property type="status" value="ALT_SEQ"/>
    <property type="molecule type" value="Genomic_DNA"/>
</dbReference>
<dbReference type="EMBL" id="CP002684">
    <property type="protein sequence ID" value="AEE33083.1"/>
    <property type="molecule type" value="Genomic_DNA"/>
</dbReference>
<dbReference type="EMBL" id="BT012226">
    <property type="protein sequence ID" value="AAS76713.1"/>
    <property type="molecule type" value="mRNA"/>
</dbReference>
<dbReference type="EMBL" id="BT012413">
    <property type="protein sequence ID" value="AAS92329.1"/>
    <property type="molecule type" value="mRNA"/>
</dbReference>
<dbReference type="PIR" id="B96585">
    <property type="entry name" value="B96585"/>
</dbReference>
<dbReference type="SMR" id="Q6NLC1"/>
<dbReference type="BioGRID" id="27101">
    <property type="interactions" value="15"/>
</dbReference>
<dbReference type="FunCoup" id="Q6NLC1">
    <property type="interactions" value="4361"/>
</dbReference>
<dbReference type="IntAct" id="Q6NLC1">
    <property type="interactions" value="15"/>
</dbReference>
<dbReference type="STRING" id="3702.Q6NLC1"/>
<dbReference type="TCDB" id="3.A.1.203.8">
    <property type="family name" value="the atp-binding cassette (abc) superfamily"/>
</dbReference>
<dbReference type="iPTMnet" id="Q6NLC1"/>
<dbReference type="PaxDb" id="3702-AT1G54350.1"/>
<dbReference type="ProteomicsDB" id="245094"/>
<dbReference type="EnsemblPlants" id="AT1G54350.1">
    <property type="protein sequence ID" value="AT1G54350.1"/>
    <property type="gene ID" value="AT1G54350"/>
</dbReference>
<dbReference type="GeneID" id="841876"/>
<dbReference type="Gramene" id="AT1G54350.1">
    <property type="protein sequence ID" value="AT1G54350.1"/>
    <property type="gene ID" value="AT1G54350"/>
</dbReference>
<dbReference type="KEGG" id="ath:AT1G54350"/>
<dbReference type="Araport" id="AT1G54350"/>
<dbReference type="TAIR" id="AT1G54350">
    <property type="gene designation" value="ABCD2"/>
</dbReference>
<dbReference type="eggNOG" id="KOG0060">
    <property type="taxonomic scope" value="Eukaryota"/>
</dbReference>
<dbReference type="HOGENOM" id="CLU_007587_6_0_1"/>
<dbReference type="InParanoid" id="Q6NLC1"/>
<dbReference type="OMA" id="DIQAGHF"/>
<dbReference type="OrthoDB" id="422637at2759"/>
<dbReference type="PhylomeDB" id="Q6NLC1"/>
<dbReference type="BioCyc" id="ARA:AT1G54350-MONOMER"/>
<dbReference type="PRO" id="PR:Q6NLC1"/>
<dbReference type="Proteomes" id="UP000006548">
    <property type="component" value="Chromosome 1"/>
</dbReference>
<dbReference type="ExpressionAtlas" id="Q6NLC1">
    <property type="expression patterns" value="baseline and differential"/>
</dbReference>
<dbReference type="GO" id="GO:0009507">
    <property type="term" value="C:chloroplast"/>
    <property type="evidence" value="ECO:0007005"/>
    <property type="project" value="TAIR"/>
</dbReference>
<dbReference type="GO" id="GO:0016020">
    <property type="term" value="C:membrane"/>
    <property type="evidence" value="ECO:0007669"/>
    <property type="project" value="UniProtKB-SubCell"/>
</dbReference>
<dbReference type="GO" id="GO:0140359">
    <property type="term" value="F:ABC-type transporter activity"/>
    <property type="evidence" value="ECO:0007669"/>
    <property type="project" value="InterPro"/>
</dbReference>
<dbReference type="GO" id="GO:0005524">
    <property type="term" value="F:ATP binding"/>
    <property type="evidence" value="ECO:0007669"/>
    <property type="project" value="UniProtKB-KW"/>
</dbReference>
<dbReference type="GO" id="GO:0016887">
    <property type="term" value="F:ATP hydrolysis activity"/>
    <property type="evidence" value="ECO:0007669"/>
    <property type="project" value="InterPro"/>
</dbReference>
<dbReference type="CDD" id="cd03223">
    <property type="entry name" value="ABCD_peroxisomal_ALDP"/>
    <property type="match status" value="1"/>
</dbReference>
<dbReference type="FunFam" id="1.20.1560.10:FF:000179">
    <property type="entry name" value="Abc transporter family protein"/>
    <property type="match status" value="1"/>
</dbReference>
<dbReference type="Gene3D" id="1.20.1560.10">
    <property type="entry name" value="ABC transporter type 1, transmembrane domain"/>
    <property type="match status" value="1"/>
</dbReference>
<dbReference type="Gene3D" id="3.40.50.300">
    <property type="entry name" value="P-loop containing nucleotide triphosphate hydrolases"/>
    <property type="match status" value="1"/>
</dbReference>
<dbReference type="InterPro" id="IPR003593">
    <property type="entry name" value="AAA+_ATPase"/>
</dbReference>
<dbReference type="InterPro" id="IPR011527">
    <property type="entry name" value="ABC1_TM_dom"/>
</dbReference>
<dbReference type="InterPro" id="IPR036640">
    <property type="entry name" value="ABC1_TM_sf"/>
</dbReference>
<dbReference type="InterPro" id="IPR003439">
    <property type="entry name" value="ABC_transporter-like_ATP-bd"/>
</dbReference>
<dbReference type="InterPro" id="IPR017871">
    <property type="entry name" value="ABC_transporter-like_CS"/>
</dbReference>
<dbReference type="InterPro" id="IPR050835">
    <property type="entry name" value="ABC_transporter_sub-D"/>
</dbReference>
<dbReference type="InterPro" id="IPR027417">
    <property type="entry name" value="P-loop_NTPase"/>
</dbReference>
<dbReference type="PANTHER" id="PTHR11384">
    <property type="entry name" value="ATP-BINDING CASSETTE, SUB-FAMILY D MEMBER"/>
    <property type="match status" value="1"/>
</dbReference>
<dbReference type="PANTHER" id="PTHR11384:SF59">
    <property type="entry name" value="LYSOSOMAL COBALAMIN TRANSPORTER ABCD4"/>
    <property type="match status" value="1"/>
</dbReference>
<dbReference type="Pfam" id="PF06472">
    <property type="entry name" value="ABC_membrane_2"/>
    <property type="match status" value="1"/>
</dbReference>
<dbReference type="Pfam" id="PF00005">
    <property type="entry name" value="ABC_tran"/>
    <property type="match status" value="1"/>
</dbReference>
<dbReference type="SMART" id="SM00382">
    <property type="entry name" value="AAA"/>
    <property type="match status" value="1"/>
</dbReference>
<dbReference type="SUPFAM" id="SSF90123">
    <property type="entry name" value="ABC transporter transmembrane region"/>
    <property type="match status" value="1"/>
</dbReference>
<dbReference type="SUPFAM" id="SSF52540">
    <property type="entry name" value="P-loop containing nucleoside triphosphate hydrolases"/>
    <property type="match status" value="1"/>
</dbReference>
<dbReference type="PROSITE" id="PS50929">
    <property type="entry name" value="ABC_TM1F"/>
    <property type="match status" value="1"/>
</dbReference>
<dbReference type="PROSITE" id="PS00211">
    <property type="entry name" value="ABC_TRANSPORTER_1"/>
    <property type="match status" value="1"/>
</dbReference>
<dbReference type="PROSITE" id="PS50893">
    <property type="entry name" value="ABC_TRANSPORTER_2"/>
    <property type="match status" value="1"/>
</dbReference>
<comment type="subunit">
    <text evidence="5">Homodimer or heterodimer.</text>
</comment>
<comment type="subcellular location">
    <subcellularLocation>
        <location evidence="2">Membrane</location>
        <topology evidence="2">Multi-pass membrane protein</topology>
    </subcellularLocation>
    <subcellularLocation>
        <location evidence="4">Plastid</location>
        <location evidence="4">Chloroplast</location>
    </subcellularLocation>
</comment>
<comment type="similarity">
    <text evidence="5">Belongs to the ABC transporter superfamily. ABCD family. Peroxisomal fatty acyl CoA transporter (TC 3.A.1.203) subfamily.</text>
</comment>
<comment type="sequence caution" evidence="5">
    <conflict type="erroneous gene model prediction">
        <sequence resource="EMBL-CDS" id="AAD25615"/>
    </conflict>
</comment>
<name>AB2D_ARATH</name>
<protein>
    <recommendedName>
        <fullName>ABC transporter D family member 2, chloroplastic</fullName>
        <shortName>ABC transporter ABCD.2</shortName>
        <shortName>AtABCD2</shortName>
        <ecNumber>7.-.-.-</ecNumber>
    </recommendedName>
</protein>
<keyword id="KW-0007">Acetylation</keyword>
<keyword id="KW-0067">ATP-binding</keyword>
<keyword id="KW-0150">Chloroplast</keyword>
<keyword id="KW-0903">Direct protein sequencing</keyword>
<keyword id="KW-0472">Membrane</keyword>
<keyword id="KW-0547">Nucleotide-binding</keyword>
<keyword id="KW-0934">Plastid</keyword>
<keyword id="KW-1185">Reference proteome</keyword>
<keyword id="KW-0809">Transit peptide</keyword>
<keyword id="KW-1278">Translocase</keyword>
<keyword id="KW-0812">Transmembrane</keyword>
<keyword id="KW-1133">Transmembrane helix</keyword>
<keyword id="KW-0813">Transport</keyword>
<proteinExistence type="evidence at protein level"/>
<feature type="transit peptide" description="Chloroplast" evidence="4">
    <location>
        <begin position="1"/>
        <end position="44"/>
    </location>
</feature>
<feature type="chain" id="PRO_0000379136" description="ABC transporter D family member 2, chloroplastic">
    <location>
        <begin position="45"/>
        <end position="706"/>
    </location>
</feature>
<feature type="transmembrane region" description="Helical" evidence="2">
    <location>
        <begin position="88"/>
        <end position="108"/>
    </location>
</feature>
<feature type="transmembrane region" description="Helical" evidence="2">
    <location>
        <begin position="124"/>
        <end position="144"/>
    </location>
</feature>
<feature type="transmembrane region" description="Helical" evidence="2">
    <location>
        <begin position="200"/>
        <end position="222"/>
    </location>
</feature>
<feature type="transmembrane region" description="Helical" evidence="2">
    <location>
        <begin position="237"/>
        <end position="257"/>
    </location>
</feature>
<feature type="transmembrane region" description="Helical" evidence="2">
    <location>
        <begin position="326"/>
        <end position="346"/>
    </location>
</feature>
<feature type="domain" description="ABC transmembrane type-1" evidence="2">
    <location>
        <begin position="88"/>
        <end position="372"/>
    </location>
</feature>
<feature type="domain" description="ABC transporter" evidence="1">
    <location>
        <begin position="430"/>
        <end position="697"/>
    </location>
</feature>
<feature type="region of interest" description="Disordered" evidence="3">
    <location>
        <begin position="545"/>
        <end position="569"/>
    </location>
</feature>
<feature type="compositionally biased region" description="Basic and acidic residues" evidence="3">
    <location>
        <begin position="560"/>
        <end position="569"/>
    </location>
</feature>
<feature type="binding site" evidence="1">
    <location>
        <begin position="464"/>
        <end position="471"/>
    </location>
    <ligand>
        <name>ATP</name>
        <dbReference type="ChEBI" id="CHEBI:30616"/>
    </ligand>
</feature>
<feature type="modified residue" description="N-acetylserine" evidence="4">
    <location>
        <position position="45"/>
    </location>
</feature>
<evidence type="ECO:0000255" key="1">
    <source>
        <dbReference type="PROSITE-ProRule" id="PRU00434"/>
    </source>
</evidence>
<evidence type="ECO:0000255" key="2">
    <source>
        <dbReference type="PROSITE-ProRule" id="PRU00441"/>
    </source>
</evidence>
<evidence type="ECO:0000256" key="3">
    <source>
        <dbReference type="SAM" id="MobiDB-lite"/>
    </source>
</evidence>
<evidence type="ECO:0000269" key="4">
    <source>
    </source>
</evidence>
<evidence type="ECO:0000305" key="5"/>
<gene>
    <name type="primary">ABCC2</name>
    <name type="synonym">PMP1</name>
    <name type="ordered locus">At1g54350</name>
    <name type="ORF">F20D21.17</name>
</gene>